<reference key="1">
    <citation type="journal article" date="2000" name="Nature">
        <title>Sequence and analysis of chromosome 5 of the plant Arabidopsis thaliana.</title>
        <authorList>
            <person name="Tabata S."/>
            <person name="Kaneko T."/>
            <person name="Nakamura Y."/>
            <person name="Kotani H."/>
            <person name="Kato T."/>
            <person name="Asamizu E."/>
            <person name="Miyajima N."/>
            <person name="Sasamoto S."/>
            <person name="Kimura T."/>
            <person name="Hosouchi T."/>
            <person name="Kawashima K."/>
            <person name="Kohara M."/>
            <person name="Matsumoto M."/>
            <person name="Matsuno A."/>
            <person name="Muraki A."/>
            <person name="Nakayama S."/>
            <person name="Nakazaki N."/>
            <person name="Naruo K."/>
            <person name="Okumura S."/>
            <person name="Shinpo S."/>
            <person name="Takeuchi C."/>
            <person name="Wada T."/>
            <person name="Watanabe A."/>
            <person name="Yamada M."/>
            <person name="Yasuda M."/>
            <person name="Sato S."/>
            <person name="de la Bastide M."/>
            <person name="Huang E."/>
            <person name="Spiegel L."/>
            <person name="Gnoj L."/>
            <person name="O'Shaughnessy A."/>
            <person name="Preston R."/>
            <person name="Habermann K."/>
            <person name="Murray J."/>
            <person name="Johnson D."/>
            <person name="Rohlfing T."/>
            <person name="Nelson J."/>
            <person name="Stoneking T."/>
            <person name="Pepin K."/>
            <person name="Spieth J."/>
            <person name="Sekhon M."/>
            <person name="Armstrong J."/>
            <person name="Becker M."/>
            <person name="Belter E."/>
            <person name="Cordum H."/>
            <person name="Cordes M."/>
            <person name="Courtney L."/>
            <person name="Courtney W."/>
            <person name="Dante M."/>
            <person name="Du H."/>
            <person name="Edwards J."/>
            <person name="Fryman J."/>
            <person name="Haakensen B."/>
            <person name="Lamar E."/>
            <person name="Latreille P."/>
            <person name="Leonard S."/>
            <person name="Meyer R."/>
            <person name="Mulvaney E."/>
            <person name="Ozersky P."/>
            <person name="Riley A."/>
            <person name="Strowmatt C."/>
            <person name="Wagner-McPherson C."/>
            <person name="Wollam A."/>
            <person name="Yoakum M."/>
            <person name="Bell M."/>
            <person name="Dedhia N."/>
            <person name="Parnell L."/>
            <person name="Shah R."/>
            <person name="Rodriguez M."/>
            <person name="Hoon See L."/>
            <person name="Vil D."/>
            <person name="Baker J."/>
            <person name="Kirchoff K."/>
            <person name="Toth K."/>
            <person name="King L."/>
            <person name="Bahret A."/>
            <person name="Miller B."/>
            <person name="Marra M.A."/>
            <person name="Martienssen R."/>
            <person name="McCombie W.R."/>
            <person name="Wilson R.K."/>
            <person name="Murphy G."/>
            <person name="Bancroft I."/>
            <person name="Volckaert G."/>
            <person name="Wambutt R."/>
            <person name="Duesterhoeft A."/>
            <person name="Stiekema W."/>
            <person name="Pohl T."/>
            <person name="Entian K.-D."/>
            <person name="Terryn N."/>
            <person name="Hartley N."/>
            <person name="Bent E."/>
            <person name="Johnson S."/>
            <person name="Langham S.-A."/>
            <person name="McCullagh B."/>
            <person name="Robben J."/>
            <person name="Grymonprez B."/>
            <person name="Zimmermann W."/>
            <person name="Ramsperger U."/>
            <person name="Wedler H."/>
            <person name="Balke K."/>
            <person name="Wedler E."/>
            <person name="Peters S."/>
            <person name="van Staveren M."/>
            <person name="Dirkse W."/>
            <person name="Mooijman P."/>
            <person name="Klein Lankhorst R."/>
            <person name="Weitzenegger T."/>
            <person name="Bothe G."/>
            <person name="Rose M."/>
            <person name="Hauf J."/>
            <person name="Berneiser S."/>
            <person name="Hempel S."/>
            <person name="Feldpausch M."/>
            <person name="Lamberth S."/>
            <person name="Villarroel R."/>
            <person name="Gielen J."/>
            <person name="Ardiles W."/>
            <person name="Bents O."/>
            <person name="Lemcke K."/>
            <person name="Kolesov G."/>
            <person name="Mayer K.F.X."/>
            <person name="Rudd S."/>
            <person name="Schoof H."/>
            <person name="Schueller C."/>
            <person name="Zaccaria P."/>
            <person name="Mewes H.-W."/>
            <person name="Bevan M."/>
            <person name="Fransz P.F."/>
        </authorList>
    </citation>
    <scope>NUCLEOTIDE SEQUENCE [LARGE SCALE GENOMIC DNA]</scope>
    <source>
        <strain>cv. Columbia</strain>
    </source>
</reference>
<reference key="2">
    <citation type="journal article" date="2017" name="Plant J.">
        <title>Araport11: a complete reannotation of the Arabidopsis thaliana reference genome.</title>
        <authorList>
            <person name="Cheng C.Y."/>
            <person name="Krishnakumar V."/>
            <person name="Chan A.P."/>
            <person name="Thibaud-Nissen F."/>
            <person name="Schobel S."/>
            <person name="Town C.D."/>
        </authorList>
    </citation>
    <scope>GENOME REANNOTATION</scope>
    <source>
        <strain>cv. Columbia</strain>
    </source>
</reference>
<reference key="3">
    <citation type="journal article" date="1999" name="Plant Mol. Biol.">
        <title>Analysis of Arabidopsis genome sequence reveals a large new gene family in plants.</title>
        <authorList>
            <person name="Ride J.P."/>
            <person name="Davies E.M."/>
            <person name="Franklin F.C.H."/>
            <person name="Marshall D.F."/>
        </authorList>
    </citation>
    <scope>GENE FAMILY</scope>
    <scope>NOMENCLATURE</scope>
    <source>
        <strain>cv. Columbia</strain>
    </source>
</reference>
<gene>
    <name evidence="2" type="primary">SPH7</name>
    <name evidence="5" type="ordered locus">At5g27238</name>
    <name evidence="3" type="ORF">T21B4</name>
</gene>
<sequence length="135" mass="15543">MNNLFVLVIIIVLSAGSNNGSKLFPKNQLYFRNSFNRNYDILTVHCKSDKDDLGIHTVARSYVYFFKFGDSIFGDTEIVCTLNHGVSATKYKVTFTAYKESRFVIRFGAIKIWEARDDGIYLTDEDHDAVKMYGW</sequence>
<protein>
    <recommendedName>
        <fullName evidence="2">S-protein homolog 7</fullName>
    </recommendedName>
</protein>
<dbReference type="EMBL" id="AF007271">
    <property type="status" value="NOT_ANNOTATED_CDS"/>
    <property type="molecule type" value="Genomic_DNA"/>
</dbReference>
<dbReference type="EMBL" id="CP002688">
    <property type="protein sequence ID" value="AED93661.1"/>
    <property type="molecule type" value="Genomic_DNA"/>
</dbReference>
<dbReference type="RefSeq" id="NP_001119284.1">
    <property type="nucleotide sequence ID" value="NM_001125812.1"/>
</dbReference>
<dbReference type="SMR" id="B3H5E1"/>
<dbReference type="STRING" id="3702.B3H5E1"/>
<dbReference type="PaxDb" id="3702-AT5G27238.1"/>
<dbReference type="ProteomicsDB" id="232483"/>
<dbReference type="EnsemblPlants" id="AT5G27238.1">
    <property type="protein sequence ID" value="AT5G27238.1"/>
    <property type="gene ID" value="AT5G27238"/>
</dbReference>
<dbReference type="GeneID" id="6240228"/>
<dbReference type="Gramene" id="AT5G27238.1">
    <property type="protein sequence ID" value="AT5G27238.1"/>
    <property type="gene ID" value="AT5G27238"/>
</dbReference>
<dbReference type="KEGG" id="ath:AT5G27238"/>
<dbReference type="Araport" id="AT5G27238"/>
<dbReference type="TAIR" id="AT5G27238"/>
<dbReference type="HOGENOM" id="CLU_125658_3_0_1"/>
<dbReference type="InParanoid" id="B3H5E1"/>
<dbReference type="OMA" id="YKESRFV"/>
<dbReference type="OrthoDB" id="1022885at2759"/>
<dbReference type="PhylomeDB" id="B3H5E1"/>
<dbReference type="PRO" id="PR:B3H5E1"/>
<dbReference type="Proteomes" id="UP000006548">
    <property type="component" value="Chromosome 5"/>
</dbReference>
<dbReference type="ExpressionAtlas" id="B3H5E1">
    <property type="expression patterns" value="baseline"/>
</dbReference>
<dbReference type="GO" id="GO:0005576">
    <property type="term" value="C:extracellular region"/>
    <property type="evidence" value="ECO:0007669"/>
    <property type="project" value="UniProtKB-SubCell"/>
</dbReference>
<dbReference type="GO" id="GO:0060320">
    <property type="term" value="P:rejection of self pollen"/>
    <property type="evidence" value="ECO:0007669"/>
    <property type="project" value="UniProtKB-KW"/>
</dbReference>
<dbReference type="InterPro" id="IPR010264">
    <property type="entry name" value="Self-incomp_S1"/>
</dbReference>
<dbReference type="PANTHER" id="PTHR31232">
    <property type="match status" value="1"/>
</dbReference>
<dbReference type="PANTHER" id="PTHR31232:SF39">
    <property type="entry name" value="S-PROTEIN HOMOLOG-RELATED"/>
    <property type="match status" value="1"/>
</dbReference>
<dbReference type="Pfam" id="PF05938">
    <property type="entry name" value="Self-incomp_S1"/>
    <property type="match status" value="1"/>
</dbReference>
<evidence type="ECO:0000255" key="1"/>
<evidence type="ECO:0000303" key="2">
    <source>
    </source>
</evidence>
<evidence type="ECO:0000305" key="3"/>
<evidence type="ECO:0000305" key="4">
    <source>
    </source>
</evidence>
<evidence type="ECO:0000312" key="5">
    <source>
        <dbReference type="Araport" id="AT5G27238"/>
    </source>
</evidence>
<proteinExistence type="inferred from homology"/>
<comment type="subcellular location">
    <subcellularLocation>
        <location evidence="4">Secreted</location>
    </subcellularLocation>
</comment>
<comment type="similarity">
    <text evidence="3">Belongs to the plant self-incompatibility (S1) protein family.</text>
</comment>
<name>SPH7_ARATH</name>
<feature type="signal peptide" evidence="1">
    <location>
        <begin position="1"/>
        <end position="20"/>
    </location>
</feature>
<feature type="chain" id="PRO_5002789335" description="S-protein homolog 7">
    <location>
        <begin position="21"/>
        <end position="135"/>
    </location>
</feature>
<keyword id="KW-1185">Reference proteome</keyword>
<keyword id="KW-0964">Secreted</keyword>
<keyword id="KW-0713">Self-incompatibility</keyword>
<keyword id="KW-0732">Signal</keyword>
<accession>B3H5E1</accession>
<organism>
    <name type="scientific">Arabidopsis thaliana</name>
    <name type="common">Mouse-ear cress</name>
    <dbReference type="NCBI Taxonomy" id="3702"/>
    <lineage>
        <taxon>Eukaryota</taxon>
        <taxon>Viridiplantae</taxon>
        <taxon>Streptophyta</taxon>
        <taxon>Embryophyta</taxon>
        <taxon>Tracheophyta</taxon>
        <taxon>Spermatophyta</taxon>
        <taxon>Magnoliopsida</taxon>
        <taxon>eudicotyledons</taxon>
        <taxon>Gunneridae</taxon>
        <taxon>Pentapetalae</taxon>
        <taxon>rosids</taxon>
        <taxon>malvids</taxon>
        <taxon>Brassicales</taxon>
        <taxon>Brassicaceae</taxon>
        <taxon>Camelineae</taxon>
        <taxon>Arabidopsis</taxon>
    </lineage>
</organism>